<name>HIS5_METJA</name>
<sequence length="196" mass="22101">MIGIIDYNAGNLRSIQKAVELYDKVIITNNSEELLACDKIILPGVGNFGSAMENLAPLKETIYKIVDDRVPFLGICLGMQILFEESEEKRGIKGLGIIKGNVIKFKDVEKLPHMGWNSVKIVKDCPLFEGIKNNSYFYFVHSYHVNPDEDCIVGKTEYGREFPSVINKDNVFATQFHPEKSGKIGLKIIENFVELL</sequence>
<feature type="chain" id="PRO_0000152458" description="Imidazole glycerol phosphate synthase subunit HisH">
    <location>
        <begin position="1"/>
        <end position="196"/>
    </location>
</feature>
<feature type="domain" description="Glutamine amidotransferase type-1">
    <location>
        <begin position="1"/>
        <end position="196"/>
    </location>
</feature>
<feature type="active site" description="Nucleophile" evidence="1">
    <location>
        <position position="76"/>
    </location>
</feature>
<feature type="active site" evidence="1">
    <location>
        <position position="177"/>
    </location>
</feature>
<feature type="active site" evidence="1">
    <location>
        <position position="179"/>
    </location>
</feature>
<accession>Q57929</accession>
<gene>
    <name type="primary">hisH</name>
    <name type="ordered locus">MJ0506</name>
</gene>
<proteinExistence type="inferred from homology"/>
<protein>
    <recommendedName>
        <fullName>Imidazole glycerol phosphate synthase subunit HisH</fullName>
        <ecNumber>4.3.2.10</ecNumber>
    </recommendedName>
    <alternativeName>
        <fullName>IGP synthase glutaminase subunit</fullName>
        <ecNumber>3.5.1.2</ecNumber>
    </alternativeName>
    <alternativeName>
        <fullName>IGP synthase subunit HisH</fullName>
    </alternativeName>
    <alternativeName>
        <fullName>ImGP synthase subunit HisH</fullName>
        <shortName>IGPS subunit HisH</shortName>
    </alternativeName>
</protein>
<evidence type="ECO:0000250" key="1"/>
<evidence type="ECO:0000305" key="2"/>
<keyword id="KW-0028">Amino-acid biosynthesis</keyword>
<keyword id="KW-0963">Cytoplasm</keyword>
<keyword id="KW-0315">Glutamine amidotransferase</keyword>
<keyword id="KW-0368">Histidine biosynthesis</keyword>
<keyword id="KW-0378">Hydrolase</keyword>
<keyword id="KW-0456">Lyase</keyword>
<keyword id="KW-1185">Reference proteome</keyword>
<comment type="function">
    <text evidence="1">IGPS catalyzes the conversion of PRFAR and glutamine to IGP, AICAR and glutamate. The HisH subunit catalyzes the hydrolysis of glutamine to glutamate and ammonia as part of the synthesis of IGP and AICAR. The resulting ammonia molecule is channeled to the active site of HisF (By similarity).</text>
</comment>
<comment type="catalytic activity">
    <reaction>
        <text>5-[(5-phospho-1-deoxy-D-ribulos-1-ylimino)methylamino]-1-(5-phospho-beta-D-ribosyl)imidazole-4-carboxamide + L-glutamine = D-erythro-1-(imidazol-4-yl)glycerol 3-phosphate + 5-amino-1-(5-phospho-beta-D-ribosyl)imidazole-4-carboxamide + L-glutamate + H(+)</text>
        <dbReference type="Rhea" id="RHEA:24793"/>
        <dbReference type="ChEBI" id="CHEBI:15378"/>
        <dbReference type="ChEBI" id="CHEBI:29985"/>
        <dbReference type="ChEBI" id="CHEBI:58278"/>
        <dbReference type="ChEBI" id="CHEBI:58359"/>
        <dbReference type="ChEBI" id="CHEBI:58475"/>
        <dbReference type="ChEBI" id="CHEBI:58525"/>
        <dbReference type="EC" id="4.3.2.10"/>
    </reaction>
</comment>
<comment type="catalytic activity">
    <reaction>
        <text>L-glutamine + H2O = L-glutamate + NH4(+)</text>
        <dbReference type="Rhea" id="RHEA:15889"/>
        <dbReference type="ChEBI" id="CHEBI:15377"/>
        <dbReference type="ChEBI" id="CHEBI:28938"/>
        <dbReference type="ChEBI" id="CHEBI:29985"/>
        <dbReference type="ChEBI" id="CHEBI:58359"/>
        <dbReference type="EC" id="3.5.1.2"/>
    </reaction>
</comment>
<comment type="pathway">
    <text>Amino-acid biosynthesis; L-histidine biosynthesis; L-histidine from 5-phospho-alpha-D-ribose 1-diphosphate: step 5/9.</text>
</comment>
<comment type="subunit">
    <text evidence="1">Heterodimer of HisH and HisF.</text>
</comment>
<comment type="subcellular location">
    <subcellularLocation>
        <location evidence="1">Cytoplasm</location>
    </subcellularLocation>
</comment>
<comment type="sequence caution" evidence="2">
    <conflict type="erroneous initiation">
        <sequence resource="EMBL-CDS" id="AAB98496"/>
    </conflict>
</comment>
<reference key="1">
    <citation type="journal article" date="1996" name="Science">
        <title>Complete genome sequence of the methanogenic archaeon, Methanococcus jannaschii.</title>
        <authorList>
            <person name="Bult C.J."/>
            <person name="White O."/>
            <person name="Olsen G.J."/>
            <person name="Zhou L."/>
            <person name="Fleischmann R.D."/>
            <person name="Sutton G.G."/>
            <person name="Blake J.A."/>
            <person name="FitzGerald L.M."/>
            <person name="Clayton R.A."/>
            <person name="Gocayne J.D."/>
            <person name="Kerlavage A.R."/>
            <person name="Dougherty B.A."/>
            <person name="Tomb J.-F."/>
            <person name="Adams M.D."/>
            <person name="Reich C.I."/>
            <person name="Overbeek R."/>
            <person name="Kirkness E.F."/>
            <person name="Weinstock K.G."/>
            <person name="Merrick J.M."/>
            <person name="Glodek A."/>
            <person name="Scott J.L."/>
            <person name="Geoghagen N.S.M."/>
            <person name="Weidman J.F."/>
            <person name="Fuhrmann J.L."/>
            <person name="Nguyen D."/>
            <person name="Utterback T.R."/>
            <person name="Kelley J.M."/>
            <person name="Peterson J.D."/>
            <person name="Sadow P.W."/>
            <person name="Hanna M.C."/>
            <person name="Cotton M.D."/>
            <person name="Roberts K.M."/>
            <person name="Hurst M.A."/>
            <person name="Kaine B.P."/>
            <person name="Borodovsky M."/>
            <person name="Klenk H.-P."/>
            <person name="Fraser C.M."/>
            <person name="Smith H.O."/>
            <person name="Woese C.R."/>
            <person name="Venter J.C."/>
        </authorList>
    </citation>
    <scope>NUCLEOTIDE SEQUENCE [LARGE SCALE GENOMIC DNA]</scope>
    <source>
        <strain>ATCC 43067 / DSM 2661 / JAL-1 / JCM 10045 / NBRC 100440</strain>
    </source>
</reference>
<organism>
    <name type="scientific">Methanocaldococcus jannaschii (strain ATCC 43067 / DSM 2661 / JAL-1 / JCM 10045 / NBRC 100440)</name>
    <name type="common">Methanococcus jannaschii</name>
    <dbReference type="NCBI Taxonomy" id="243232"/>
    <lineage>
        <taxon>Archaea</taxon>
        <taxon>Methanobacteriati</taxon>
        <taxon>Methanobacteriota</taxon>
        <taxon>Methanomada group</taxon>
        <taxon>Methanococci</taxon>
        <taxon>Methanococcales</taxon>
        <taxon>Methanocaldococcaceae</taxon>
        <taxon>Methanocaldococcus</taxon>
    </lineage>
</organism>
<dbReference type="EC" id="4.3.2.10"/>
<dbReference type="EC" id="3.5.1.2"/>
<dbReference type="EMBL" id="L77117">
    <property type="protein sequence ID" value="AAB98496.1"/>
    <property type="status" value="ALT_INIT"/>
    <property type="molecule type" value="Genomic_DNA"/>
</dbReference>
<dbReference type="PIR" id="B64363">
    <property type="entry name" value="B64363"/>
</dbReference>
<dbReference type="RefSeq" id="WP_064496519.1">
    <property type="nucleotide sequence ID" value="NC_000909.1"/>
</dbReference>
<dbReference type="SMR" id="Q57929"/>
<dbReference type="FunCoup" id="Q57929">
    <property type="interactions" value="97"/>
</dbReference>
<dbReference type="STRING" id="243232.MJ_0506"/>
<dbReference type="MEROPS" id="C26.965"/>
<dbReference type="PaxDb" id="243232-MJ_0506"/>
<dbReference type="EnsemblBacteria" id="AAB98496">
    <property type="protein sequence ID" value="AAB98496"/>
    <property type="gene ID" value="MJ_0506"/>
</dbReference>
<dbReference type="GeneID" id="1451368"/>
<dbReference type="KEGG" id="mja:MJ_0506"/>
<dbReference type="eggNOG" id="arCOG00089">
    <property type="taxonomic scope" value="Archaea"/>
</dbReference>
<dbReference type="HOGENOM" id="CLU_071837_2_2_2"/>
<dbReference type="InParanoid" id="Q57929"/>
<dbReference type="OrthoDB" id="33401at2157"/>
<dbReference type="PhylomeDB" id="Q57929"/>
<dbReference type="UniPathway" id="UPA00031">
    <property type="reaction ID" value="UER00010"/>
</dbReference>
<dbReference type="Proteomes" id="UP000000805">
    <property type="component" value="Chromosome"/>
</dbReference>
<dbReference type="GO" id="GO:0005737">
    <property type="term" value="C:cytoplasm"/>
    <property type="evidence" value="ECO:0007669"/>
    <property type="project" value="UniProtKB-SubCell"/>
</dbReference>
<dbReference type="GO" id="GO:0004359">
    <property type="term" value="F:glutaminase activity"/>
    <property type="evidence" value="ECO:0007669"/>
    <property type="project" value="UniProtKB-EC"/>
</dbReference>
<dbReference type="GO" id="GO:0000107">
    <property type="term" value="F:imidazoleglycerol-phosphate synthase activity"/>
    <property type="evidence" value="ECO:0000318"/>
    <property type="project" value="GO_Central"/>
</dbReference>
<dbReference type="GO" id="GO:0016829">
    <property type="term" value="F:lyase activity"/>
    <property type="evidence" value="ECO:0007669"/>
    <property type="project" value="UniProtKB-KW"/>
</dbReference>
<dbReference type="GO" id="GO:0000105">
    <property type="term" value="P:L-histidine biosynthetic process"/>
    <property type="evidence" value="ECO:0007669"/>
    <property type="project" value="UniProtKB-UniRule"/>
</dbReference>
<dbReference type="CDD" id="cd01748">
    <property type="entry name" value="GATase1_IGP_Synthase"/>
    <property type="match status" value="1"/>
</dbReference>
<dbReference type="FunFam" id="3.40.50.880:FF:000009">
    <property type="entry name" value="Imidazole glycerol phosphate synthase subunit HisH"/>
    <property type="match status" value="1"/>
</dbReference>
<dbReference type="Gene3D" id="3.40.50.880">
    <property type="match status" value="1"/>
</dbReference>
<dbReference type="HAMAP" id="MF_00278">
    <property type="entry name" value="HisH"/>
    <property type="match status" value="1"/>
</dbReference>
<dbReference type="InterPro" id="IPR029062">
    <property type="entry name" value="Class_I_gatase-like"/>
</dbReference>
<dbReference type="InterPro" id="IPR017926">
    <property type="entry name" value="GATASE"/>
</dbReference>
<dbReference type="InterPro" id="IPR010139">
    <property type="entry name" value="Imidazole-glycPsynth_HisH"/>
</dbReference>
<dbReference type="NCBIfam" id="TIGR01855">
    <property type="entry name" value="IMP_synth_hisH"/>
    <property type="match status" value="1"/>
</dbReference>
<dbReference type="PANTHER" id="PTHR42701">
    <property type="entry name" value="IMIDAZOLE GLYCEROL PHOSPHATE SYNTHASE SUBUNIT HISH"/>
    <property type="match status" value="1"/>
</dbReference>
<dbReference type="PANTHER" id="PTHR42701:SF1">
    <property type="entry name" value="IMIDAZOLE GLYCEROL PHOSPHATE SYNTHASE SUBUNIT HISH"/>
    <property type="match status" value="1"/>
</dbReference>
<dbReference type="Pfam" id="PF00117">
    <property type="entry name" value="GATase"/>
    <property type="match status" value="1"/>
</dbReference>
<dbReference type="PIRSF" id="PIRSF000495">
    <property type="entry name" value="Amidotransf_hisH"/>
    <property type="match status" value="1"/>
</dbReference>
<dbReference type="SUPFAM" id="SSF52317">
    <property type="entry name" value="Class I glutamine amidotransferase-like"/>
    <property type="match status" value="1"/>
</dbReference>
<dbReference type="PROSITE" id="PS51273">
    <property type="entry name" value="GATASE_TYPE_1"/>
    <property type="match status" value="1"/>
</dbReference>